<comment type="function">
    <text evidence="2">Nucleoside monophosphate (NMP) kinase that catalyzes the reversible transfer of the terminal phosphate group between nucleoside triphosphates and monophosphates. Has highest activity toward AMP, and weaker activity toward dAMP, CMP and dCMP. Also displays broad nucleoside diphosphate kinase activity.</text>
</comment>
<comment type="catalytic activity">
    <reaction evidence="2">
        <text>AMP + ATP = 2 ADP</text>
        <dbReference type="Rhea" id="RHEA:12973"/>
        <dbReference type="ChEBI" id="CHEBI:30616"/>
        <dbReference type="ChEBI" id="CHEBI:456215"/>
        <dbReference type="ChEBI" id="CHEBI:456216"/>
        <dbReference type="EC" id="2.7.4.3"/>
    </reaction>
</comment>
<comment type="catalytic activity">
    <reaction evidence="2">
        <text>a 2'-deoxyribonucleoside 5'-diphosphate + ATP = a 2'-deoxyribonucleoside 5'-triphosphate + ADP</text>
        <dbReference type="Rhea" id="RHEA:44640"/>
        <dbReference type="ChEBI" id="CHEBI:30616"/>
        <dbReference type="ChEBI" id="CHEBI:61560"/>
        <dbReference type="ChEBI" id="CHEBI:73316"/>
        <dbReference type="ChEBI" id="CHEBI:456216"/>
        <dbReference type="EC" id="2.7.4.6"/>
    </reaction>
</comment>
<comment type="catalytic activity">
    <reaction evidence="2">
        <text>a ribonucleoside 5'-diphosphate + ATP = a ribonucleoside 5'-triphosphate + ADP</text>
        <dbReference type="Rhea" id="RHEA:18113"/>
        <dbReference type="ChEBI" id="CHEBI:30616"/>
        <dbReference type="ChEBI" id="CHEBI:57930"/>
        <dbReference type="ChEBI" id="CHEBI:61557"/>
        <dbReference type="ChEBI" id="CHEBI:456216"/>
        <dbReference type="EC" id="2.7.4.6"/>
    </reaction>
</comment>
<comment type="subunit">
    <text evidence="2">Interacts with CFAP45 and CFAP52; CFAP45 and AK8 dimerization may create a cavity at the interface of the dimer that can accommodate AMP.</text>
</comment>
<comment type="subcellular location">
    <subcellularLocation>
        <location evidence="2">Cytoplasm</location>
        <location evidence="2">Cytosol</location>
    </subcellularLocation>
    <subcellularLocation>
        <location evidence="2">Cytoplasm</location>
        <location evidence="2">Cytoskeleton</location>
        <location evidence="2">Cilium axoneme</location>
    </subcellularLocation>
    <text evidence="2">Located in the proximal region of respiratory cilia.</text>
</comment>
<comment type="similarity">
    <text evidence="3">Belongs to the adenylate kinase family.</text>
</comment>
<keyword id="KW-0067">ATP-binding</keyword>
<keyword id="KW-0966">Cell projection</keyword>
<keyword id="KW-0963">Cytoplasm</keyword>
<keyword id="KW-0206">Cytoskeleton</keyword>
<keyword id="KW-0418">Kinase</keyword>
<keyword id="KW-0547">Nucleotide-binding</keyword>
<keyword id="KW-1185">Reference proteome</keyword>
<keyword id="KW-0808">Transferase</keyword>
<reference key="1">
    <citation type="journal article" date="2004" name="Genome Res.">
        <title>The status, quality, and expansion of the NIH full-length cDNA project: the Mammalian Gene Collection (MGC).</title>
        <authorList>
            <consortium name="The MGC Project Team"/>
        </authorList>
    </citation>
    <scope>NUCLEOTIDE SEQUENCE [LARGE SCALE MRNA]</scope>
    <source>
        <tissue>Testis</tissue>
    </source>
</reference>
<feature type="chain" id="PRO_0000279386" description="Adenylate kinase 8">
    <location>
        <begin position="1"/>
        <end position="479"/>
    </location>
</feature>
<feature type="region of interest" description="Adenylate kinase 1" evidence="2">
    <location>
        <begin position="58"/>
        <end position="258"/>
    </location>
</feature>
<feature type="region of interest" description="NMP 1" evidence="1">
    <location>
        <begin position="87"/>
        <end position="113"/>
    </location>
</feature>
<feature type="region of interest" description="LID 1" evidence="1">
    <location>
        <begin position="177"/>
        <end position="206"/>
    </location>
</feature>
<feature type="region of interest" description="Adenylate kinase 2" evidence="2">
    <location>
        <begin position="269"/>
        <end position="471"/>
    </location>
</feature>
<feature type="region of interest" description="NMP 2" evidence="1">
    <location>
        <begin position="298"/>
        <end position="327"/>
    </location>
</feature>
<feature type="region of interest" description="LID 2" evidence="1">
    <location>
        <begin position="391"/>
        <end position="424"/>
    </location>
</feature>
<feature type="binding site" evidence="1">
    <location>
        <begin position="67"/>
        <end position="72"/>
    </location>
    <ligand>
        <name>ATP</name>
        <dbReference type="ChEBI" id="CHEBI:30616"/>
        <label>1</label>
    </ligand>
</feature>
<feature type="binding site" evidence="1">
    <location>
        <begin position="140"/>
        <end position="143"/>
    </location>
    <ligand>
        <name>AMP</name>
        <dbReference type="ChEBI" id="CHEBI:456215"/>
        <label>1</label>
    </ligand>
</feature>
<feature type="binding site" evidence="1">
    <location>
        <position position="147"/>
    </location>
    <ligand>
        <name>AMP</name>
        <dbReference type="ChEBI" id="CHEBI:456215"/>
        <label>1</label>
    </ligand>
</feature>
<feature type="binding site" evidence="1">
    <location>
        <position position="203"/>
    </location>
    <ligand>
        <name>AMP</name>
        <dbReference type="ChEBI" id="CHEBI:456215"/>
        <label>1</label>
    </ligand>
</feature>
<feature type="binding site" evidence="1">
    <location>
        <begin position="278"/>
        <end position="283"/>
    </location>
    <ligand>
        <name>ATP</name>
        <dbReference type="ChEBI" id="CHEBI:30616"/>
        <label>2</label>
    </ligand>
</feature>
<feature type="binding site" evidence="1">
    <location>
        <begin position="325"/>
        <end position="327"/>
    </location>
    <ligand>
        <name>AMP</name>
        <dbReference type="ChEBI" id="CHEBI:456215"/>
        <label>2</label>
    </ligand>
</feature>
<feature type="binding site" evidence="1">
    <location>
        <begin position="354"/>
        <end position="357"/>
    </location>
    <ligand>
        <name>AMP</name>
        <dbReference type="ChEBI" id="CHEBI:456215"/>
        <label>2</label>
    </ligand>
</feature>
<feature type="binding site" evidence="1">
    <location>
        <position position="361"/>
    </location>
    <ligand>
        <name>AMP</name>
        <dbReference type="ChEBI" id="CHEBI:456215"/>
        <label>2</label>
    </ligand>
</feature>
<feature type="binding site" evidence="1">
    <location>
        <position position="392"/>
    </location>
    <ligand>
        <name>ATP</name>
        <dbReference type="ChEBI" id="CHEBI:30616"/>
        <label>2</label>
    </ligand>
</feature>
<proteinExistence type="evidence at transcript level"/>
<accession>Q68FP8</accession>
<protein>
    <recommendedName>
        <fullName>Adenylate kinase 8</fullName>
        <shortName>AK 8</shortName>
        <ecNumber>2.7.4.3</ecNumber>
        <ecNumber>2.7.4.6</ecNumber>
    </recommendedName>
    <alternativeName>
        <fullName>ATP-AMP transphosphorylase 8</fullName>
    </alternativeName>
</protein>
<gene>
    <name type="primary">Ak8</name>
</gene>
<name>KAD8_RAT</name>
<organism>
    <name type="scientific">Rattus norvegicus</name>
    <name type="common">Rat</name>
    <dbReference type="NCBI Taxonomy" id="10116"/>
    <lineage>
        <taxon>Eukaryota</taxon>
        <taxon>Metazoa</taxon>
        <taxon>Chordata</taxon>
        <taxon>Craniata</taxon>
        <taxon>Vertebrata</taxon>
        <taxon>Euteleostomi</taxon>
        <taxon>Mammalia</taxon>
        <taxon>Eutheria</taxon>
        <taxon>Euarchontoglires</taxon>
        <taxon>Glires</taxon>
        <taxon>Rodentia</taxon>
        <taxon>Myomorpha</taxon>
        <taxon>Muroidea</taxon>
        <taxon>Muridae</taxon>
        <taxon>Murinae</taxon>
        <taxon>Rattus</taxon>
    </lineage>
</organism>
<evidence type="ECO:0000250" key="1">
    <source>
        <dbReference type="UniProtKB" id="P69441"/>
    </source>
</evidence>
<evidence type="ECO:0000250" key="2">
    <source>
        <dbReference type="UniProtKB" id="Q96MA6"/>
    </source>
</evidence>
<evidence type="ECO:0000305" key="3"/>
<dbReference type="EC" id="2.7.4.3"/>
<dbReference type="EC" id="2.7.4.6"/>
<dbReference type="EMBL" id="BC079446">
    <property type="protein sequence ID" value="AAH79446.1"/>
    <property type="molecule type" value="mRNA"/>
</dbReference>
<dbReference type="RefSeq" id="NP_001004266.1">
    <property type="nucleotide sequence ID" value="NM_001004266.1"/>
</dbReference>
<dbReference type="SMR" id="Q68FP8"/>
<dbReference type="FunCoup" id="Q68FP8">
    <property type="interactions" value="369"/>
</dbReference>
<dbReference type="IntAct" id="Q68FP8">
    <property type="interactions" value="1"/>
</dbReference>
<dbReference type="STRING" id="10116.ENSRNOP00000017029"/>
<dbReference type="CarbonylDB" id="Q68FP8"/>
<dbReference type="PhosphoSitePlus" id="Q68FP8"/>
<dbReference type="PaxDb" id="10116-ENSRNOP00000017029"/>
<dbReference type="Ensembl" id="ENSRNOT00000017029.6">
    <property type="protein sequence ID" value="ENSRNOP00000017029.4"/>
    <property type="gene ID" value="ENSRNOG00000012761.7"/>
</dbReference>
<dbReference type="GeneID" id="311833"/>
<dbReference type="KEGG" id="rno:311833"/>
<dbReference type="UCSC" id="RGD:1303144">
    <property type="organism name" value="rat"/>
</dbReference>
<dbReference type="AGR" id="RGD:1303144"/>
<dbReference type="CTD" id="158067"/>
<dbReference type="RGD" id="1303144">
    <property type="gene designation" value="Ak8"/>
</dbReference>
<dbReference type="eggNOG" id="KOG3078">
    <property type="taxonomic scope" value="Eukaryota"/>
</dbReference>
<dbReference type="eggNOG" id="KOG3079">
    <property type="taxonomic scope" value="Eukaryota"/>
</dbReference>
<dbReference type="GeneTree" id="ENSGT00940000161613"/>
<dbReference type="HOGENOM" id="CLU_044905_0_0_1"/>
<dbReference type="InParanoid" id="Q68FP8"/>
<dbReference type="OMA" id="DCIRRGW"/>
<dbReference type="OrthoDB" id="522106at2759"/>
<dbReference type="PhylomeDB" id="Q68FP8"/>
<dbReference type="TreeFam" id="TF328560"/>
<dbReference type="Reactome" id="R-RNO-499943">
    <property type="pathway name" value="Interconversion of nucleotide di- and triphosphates"/>
</dbReference>
<dbReference type="PRO" id="PR:Q68FP8"/>
<dbReference type="Proteomes" id="UP000002494">
    <property type="component" value="Chromosome 3"/>
</dbReference>
<dbReference type="Bgee" id="ENSRNOG00000012761">
    <property type="expression patterns" value="Expressed in testis and 4 other cell types or tissues"/>
</dbReference>
<dbReference type="GO" id="GO:0097729">
    <property type="term" value="C:9+2 motile cilium"/>
    <property type="evidence" value="ECO:0000266"/>
    <property type="project" value="RGD"/>
</dbReference>
<dbReference type="GO" id="GO:0005930">
    <property type="term" value="C:axoneme"/>
    <property type="evidence" value="ECO:0000266"/>
    <property type="project" value="RGD"/>
</dbReference>
<dbReference type="GO" id="GO:0005737">
    <property type="term" value="C:cytoplasm"/>
    <property type="evidence" value="ECO:0000318"/>
    <property type="project" value="GO_Central"/>
</dbReference>
<dbReference type="GO" id="GO:0005829">
    <property type="term" value="C:cytosol"/>
    <property type="evidence" value="ECO:0007669"/>
    <property type="project" value="UniProtKB-SubCell"/>
</dbReference>
<dbReference type="GO" id="GO:0036126">
    <property type="term" value="C:sperm flagellum"/>
    <property type="evidence" value="ECO:0000266"/>
    <property type="project" value="RGD"/>
</dbReference>
<dbReference type="GO" id="GO:0004127">
    <property type="term" value="F:(d)CMP kinase activity"/>
    <property type="evidence" value="ECO:0000250"/>
    <property type="project" value="UniProtKB"/>
</dbReference>
<dbReference type="GO" id="GO:0004017">
    <property type="term" value="F:adenylate kinase activity"/>
    <property type="evidence" value="ECO:0000250"/>
    <property type="project" value="UniProtKB"/>
</dbReference>
<dbReference type="GO" id="GO:0016208">
    <property type="term" value="F:AMP binding"/>
    <property type="evidence" value="ECO:0000266"/>
    <property type="project" value="RGD"/>
</dbReference>
<dbReference type="GO" id="GO:0005524">
    <property type="term" value="F:ATP binding"/>
    <property type="evidence" value="ECO:0007669"/>
    <property type="project" value="UniProtKB-KW"/>
</dbReference>
<dbReference type="GO" id="GO:0004550">
    <property type="term" value="F:nucleoside diphosphate kinase activity"/>
    <property type="evidence" value="ECO:0000250"/>
    <property type="project" value="UniProtKB"/>
</dbReference>
<dbReference type="GO" id="GO:0021591">
    <property type="term" value="P:ventricular system development"/>
    <property type="evidence" value="ECO:0000266"/>
    <property type="project" value="RGD"/>
</dbReference>
<dbReference type="CDD" id="cd01428">
    <property type="entry name" value="ADK"/>
    <property type="match status" value="2"/>
</dbReference>
<dbReference type="CDD" id="cd22979">
    <property type="entry name" value="DD_AK8"/>
    <property type="match status" value="1"/>
</dbReference>
<dbReference type="FunFam" id="3.40.50.300:FF:001538">
    <property type="entry name" value="Adenylate kinase 8"/>
    <property type="match status" value="1"/>
</dbReference>
<dbReference type="FunFam" id="3.40.50.300:FF:001617">
    <property type="entry name" value="Adenylate kinase 8"/>
    <property type="match status" value="1"/>
</dbReference>
<dbReference type="Gene3D" id="3.40.50.300">
    <property type="entry name" value="P-loop containing nucleotide triphosphate hydrolases"/>
    <property type="match status" value="2"/>
</dbReference>
<dbReference type="HAMAP" id="MF_00235">
    <property type="entry name" value="Adenylate_kinase_Adk"/>
    <property type="match status" value="1"/>
</dbReference>
<dbReference type="InterPro" id="IPR000850">
    <property type="entry name" value="Adenylat/UMP-CMP_kin"/>
</dbReference>
<dbReference type="InterPro" id="IPR036193">
    <property type="entry name" value="ADK_active_lid_dom_sf"/>
</dbReference>
<dbReference type="InterPro" id="IPR027417">
    <property type="entry name" value="P-loop_NTPase"/>
</dbReference>
<dbReference type="PANTHER" id="PTHR23359">
    <property type="entry name" value="NUCLEOTIDE KINASE"/>
    <property type="match status" value="1"/>
</dbReference>
<dbReference type="Pfam" id="PF00406">
    <property type="entry name" value="ADK"/>
    <property type="match status" value="2"/>
</dbReference>
<dbReference type="PRINTS" id="PR00094">
    <property type="entry name" value="ADENYLTKNASE"/>
</dbReference>
<dbReference type="SUPFAM" id="SSF57774">
    <property type="entry name" value="Microbial and mitochondrial ADK, insert 'zinc finger' domain"/>
    <property type="match status" value="2"/>
</dbReference>
<dbReference type="SUPFAM" id="SSF52540">
    <property type="entry name" value="P-loop containing nucleoside triphosphate hydrolases"/>
    <property type="match status" value="2"/>
</dbReference>
<sequence length="479" mass="54966">MDATSAPHRIPPEMPQYGEDYHIFEMMQSMLEQLLIHQPEDPISFMISHLRRNNDNVPRVVILGPPASGKTTIAMWLCKHLNSNLITKENLLEREFSLLSLEAKKHYQVYKRVPNSTLVSLVQERLNEDDCLRRGWILDGIPERREQALMIQTLGLAPKHVIVLSAPDSVLIERNVGKRIDPVTGEIYHTTFDWPPELEIQNRLIQPEGISEIDTAKKLLEYHRHIIRILPSYPKILKTISSDQPCVDVFYQALTYVQSGHRCNAPFTPKVLLCGPMGCGKKLQAALLSQKYGLVNISCGQLLKEAMAAESSLGDLIEPFFEKRMTVPDSIITRVLTERLKQQDCIQKGWVLHGFPRDLDQARLLNSMGYSPNRVFFLNVPLDSILERLTLRRTDPVTGERFHLMYKPPPTIEVQARLLQNPKDSEEYIKLQTDLFYRNSGDLEQYYDRAIIVNGDQDPYTVFEYIESGIINPLPRKVT</sequence>